<feature type="chain" id="PRO_1000066754" description="UPF0210 protein LBUL_0934">
    <location>
        <begin position="1"/>
        <end position="447"/>
    </location>
</feature>
<accession>Q04AL4</accession>
<proteinExistence type="inferred from homology"/>
<comment type="subunit">
    <text evidence="1">Homodimer.</text>
</comment>
<comment type="similarity">
    <text evidence="1">Belongs to the UPF0210 family.</text>
</comment>
<sequence length="447" mass="46862">MDLRRIMETVNMIDNENLDLRTTTMGISLLDCIDSDSDRACQKIYDKITTKAENLVKVARELETEYGIPIANKRITVTPISLIAAASGDSDYVKYAVTLDKAAKAVGVDLIGGFSALVHKGYQNGDRVLIKSIPQALKETERVCSSVNVGSTRSGINMDAVKEMGQIVIENEKINPLNNGNLVIFCNAVEDNPFMAGGFHGVGESDVALNVGVSGPGVVKTALEKVKGESMDVVAETIKQTAFKVTRMGQLVGQEASKRLGVDFGIVDLSLAPTPAQGDSVANILEEIGLESVGTHGTTAALAMLNDAVKKGGIMACSHVGGLSGAFIPESEDAGMIAAAEKGILTVDKLEAMTAVCSVGLDMIAVPGDTPAETISAMIADEAAIGMINNKTTAVRVIPVPGKDVGDSIEFGGLFGYAPIMPVHKESSAAMINRGGRIPAPVHSFKN</sequence>
<protein>
    <recommendedName>
        <fullName evidence="1">UPF0210 protein LBUL_0934</fullName>
    </recommendedName>
</protein>
<evidence type="ECO:0000255" key="1">
    <source>
        <dbReference type="HAMAP-Rule" id="MF_01221"/>
    </source>
</evidence>
<name>Y934_LACDB</name>
<dbReference type="EMBL" id="CP000412">
    <property type="protein sequence ID" value="ABJ58508.1"/>
    <property type="molecule type" value="Genomic_DNA"/>
</dbReference>
<dbReference type="RefSeq" id="WP_002876840.1">
    <property type="nucleotide sequence ID" value="NC_008529.1"/>
</dbReference>
<dbReference type="SMR" id="Q04AL4"/>
<dbReference type="KEGG" id="lbu:LBUL_0934"/>
<dbReference type="HOGENOM" id="CLU_048704_0_0_9"/>
<dbReference type="BioCyc" id="LDEL321956:LBUL_RS04455-MONOMER"/>
<dbReference type="CDD" id="cd08025">
    <property type="entry name" value="RNR_PFL_like_DUF711"/>
    <property type="match status" value="1"/>
</dbReference>
<dbReference type="Gene3D" id="3.20.70.20">
    <property type="match status" value="1"/>
</dbReference>
<dbReference type="HAMAP" id="MF_01221">
    <property type="entry name" value="UPF0210"/>
    <property type="match status" value="1"/>
</dbReference>
<dbReference type="InterPro" id="IPR007841">
    <property type="entry name" value="UPF0210"/>
</dbReference>
<dbReference type="NCBIfam" id="NF003700">
    <property type="entry name" value="PRK05313.1"/>
    <property type="match status" value="1"/>
</dbReference>
<dbReference type="PANTHER" id="PTHR37560:SF1">
    <property type="entry name" value="UPF0210 PROTEIN MJ1665"/>
    <property type="match status" value="1"/>
</dbReference>
<dbReference type="PANTHER" id="PTHR37560">
    <property type="entry name" value="UPF0210 PROTEIN SPR0218"/>
    <property type="match status" value="1"/>
</dbReference>
<dbReference type="Pfam" id="PF05167">
    <property type="entry name" value="DUF711"/>
    <property type="match status" value="1"/>
</dbReference>
<dbReference type="SUPFAM" id="SSF51998">
    <property type="entry name" value="PFL-like glycyl radical enzymes"/>
    <property type="match status" value="1"/>
</dbReference>
<gene>
    <name type="ordered locus">LBUL_0934</name>
</gene>
<reference key="1">
    <citation type="journal article" date="2006" name="Proc. Natl. Acad. Sci. U.S.A.">
        <title>Comparative genomics of the lactic acid bacteria.</title>
        <authorList>
            <person name="Makarova K.S."/>
            <person name="Slesarev A."/>
            <person name="Wolf Y.I."/>
            <person name="Sorokin A."/>
            <person name="Mirkin B."/>
            <person name="Koonin E.V."/>
            <person name="Pavlov A."/>
            <person name="Pavlova N."/>
            <person name="Karamychev V."/>
            <person name="Polouchine N."/>
            <person name="Shakhova V."/>
            <person name="Grigoriev I."/>
            <person name="Lou Y."/>
            <person name="Rohksar D."/>
            <person name="Lucas S."/>
            <person name="Huang K."/>
            <person name="Goodstein D.M."/>
            <person name="Hawkins T."/>
            <person name="Plengvidhya V."/>
            <person name="Welker D."/>
            <person name="Hughes J."/>
            <person name="Goh Y."/>
            <person name="Benson A."/>
            <person name="Baldwin K."/>
            <person name="Lee J.-H."/>
            <person name="Diaz-Muniz I."/>
            <person name="Dosti B."/>
            <person name="Smeianov V."/>
            <person name="Wechter W."/>
            <person name="Barabote R."/>
            <person name="Lorca G."/>
            <person name="Altermann E."/>
            <person name="Barrangou R."/>
            <person name="Ganesan B."/>
            <person name="Xie Y."/>
            <person name="Rawsthorne H."/>
            <person name="Tamir D."/>
            <person name="Parker C."/>
            <person name="Breidt F."/>
            <person name="Broadbent J.R."/>
            <person name="Hutkins R."/>
            <person name="O'Sullivan D."/>
            <person name="Steele J."/>
            <person name="Unlu G."/>
            <person name="Saier M.H. Jr."/>
            <person name="Klaenhammer T."/>
            <person name="Richardson P."/>
            <person name="Kozyavkin S."/>
            <person name="Weimer B.C."/>
            <person name="Mills D.A."/>
        </authorList>
    </citation>
    <scope>NUCLEOTIDE SEQUENCE [LARGE SCALE GENOMIC DNA]</scope>
    <source>
        <strain>ATCC BAA-365 / Lb-18</strain>
    </source>
</reference>
<organism>
    <name type="scientific">Lactobacillus delbrueckii subsp. bulgaricus (strain ATCC BAA-365 / Lb-18)</name>
    <dbReference type="NCBI Taxonomy" id="321956"/>
    <lineage>
        <taxon>Bacteria</taxon>
        <taxon>Bacillati</taxon>
        <taxon>Bacillota</taxon>
        <taxon>Bacilli</taxon>
        <taxon>Lactobacillales</taxon>
        <taxon>Lactobacillaceae</taxon>
        <taxon>Lactobacillus</taxon>
    </lineage>
</organism>